<proteinExistence type="evidence at transcript level"/>
<name>QTC_DROME</name>
<comment type="function">
    <text evidence="4 5">In adult males, modulates sexual behavior by playing a role in sex discrimination and maintaining normal levels of sexual activity towards both males and females.</text>
</comment>
<comment type="alternative products">
    <event type="alternative splicing"/>
    <isoform>
        <id>Q9VMU5-1</id>
        <name evidence="15">A</name>
        <name evidence="15">F</name>
        <sequence type="displayed"/>
    </isoform>
    <isoform>
        <id>Q9VMU5-2</id>
        <name evidence="15">B</name>
        <sequence type="described" ref="VSP_060838"/>
    </isoform>
    <isoform>
        <id>Q9VMU5-3</id>
        <name evidence="15">H</name>
        <sequence type="described" ref="VSP_060838 VSP_060841 VSP_060842"/>
    </isoform>
    <isoform>
        <id>Q9VMU5-4</id>
        <name evidence="15">M</name>
        <sequence type="described" ref="VSP_060839 VSP_060840 VSP_060843"/>
    </isoform>
    <isoform>
        <id>Q9VMU5-5</id>
        <name evidence="15">N</name>
        <sequence type="described" ref="VSP_060838 VSP_060840 VSP_060843"/>
    </isoform>
</comment>
<comment type="tissue specificity">
    <text evidence="4">Expressed in the third antennal segment and the maxillary palp, with increased expression near the cuticle of both olfactory organs (PubMed:10747058). Also detected in the second antenna segment (PubMed:10747058). In the brain, expressed in the central nervous system, with high levels of expression in the visual system including the retina and optic lobe, and uniform expression in the cortex (PubMed:10747058). Detected in the thorax and abdomen, with increased expression in the ventral ganglion (PubMed:10747058). In males, detected in the reproductive tract including the ejaculatory bulb and testis (PubMed:10747058).</text>
</comment>
<comment type="developmental stage">
    <text evidence="4">Detected in embryos, adult males and females.</text>
</comment>
<comment type="disruption phenotype">
    <text evidence="4 5">Adult males appear unable to discriminate between males and females when choosing a mate; either because they display increased levels of courtship behavior towards males (when presented with only males) or they display the same levels of courtship towards both males and females (when presented with both sexes) (PubMed:10747058, PubMed:22292044). During male-female courtship, they also begin courting virgin females earlier than wild-type males, suggesting that their increased tendency to court both sexes may also be due to an increase in male sexual activity (PubMed:10747058). No effect on female sexual behavior, and other aspects of male sexual behavior appear unaffected (PubMed:10747058). RNAi-mediated knockdown in neurons of adult males abolishes their ability to discriminate between male and female during courtship (PubMed:22292044). RNAi-mediated knockdown in the mushroom bodies of adult males, results in a slight, but not significant, decrease in their ability to discriminate between males and females (PubMed:22292044). However, RNAi-mediated knockdown in various chemosensory peripheral neurons have no effect on male sex discrimination (PubMed:22292044).</text>
</comment>
<comment type="miscellaneous">
    <text evidence="6">The name 'quick-to-court' derives from mutant males being quick to initiate courtship of both females and males.</text>
</comment>
<comment type="sequence caution" evidence="7">
    <conflict type="erroneous initiation">
        <sequence resource="EMBL-CDS" id="ACW83548"/>
    </conflict>
    <text>Extended N-terminus.</text>
</comment>
<comment type="sequence caution" evidence="7">
    <conflict type="erroneous initiation">
        <sequence resource="EMBL-CDS" id="ADV19046"/>
    </conflict>
    <text>Extended N-terminus.</text>
</comment>
<comment type="sequence caution" evidence="7">
    <conflict type="erroneous initiation">
        <sequence resource="EMBL-CDS" id="AGM20425"/>
    </conflict>
    <text>Extended N-terminus.</text>
</comment>
<comment type="sequence caution" evidence="7">
    <conflict type="erroneous initiation">
        <sequence resource="EMBL-CDS" id="AGN28833"/>
    </conflict>
    <text>Extended N-terminus.</text>
</comment>
<protein>
    <recommendedName>
        <fullName evidence="6">Protein quick-to-court</fullName>
    </recommendedName>
</protein>
<dbReference type="EMBL" id="AE014134">
    <property type="protein sequence ID" value="AAF52216.2"/>
    <property type="molecule type" value="Genomic_DNA"/>
</dbReference>
<dbReference type="EMBL" id="AE014134">
    <property type="protein sequence ID" value="AAN10527.1"/>
    <property type="molecule type" value="Genomic_DNA"/>
</dbReference>
<dbReference type="EMBL" id="AE014134">
    <property type="protein sequence ID" value="AAX52654.1"/>
    <property type="molecule type" value="Genomic_DNA"/>
</dbReference>
<dbReference type="EMBL" id="AE014134">
    <property type="protein sequence ID" value="ADV36940.1"/>
    <property type="molecule type" value="Genomic_DNA"/>
</dbReference>
<dbReference type="EMBL" id="AE014134">
    <property type="protein sequence ID" value="AHN54126.1"/>
    <property type="molecule type" value="Genomic_DNA"/>
</dbReference>
<dbReference type="EMBL" id="AE014134">
    <property type="protein sequence ID" value="AHN54127.1"/>
    <property type="molecule type" value="Genomic_DNA"/>
</dbReference>
<dbReference type="EMBL" id="AY058777">
    <property type="protein sequence ID" value="AAL14006.1"/>
    <property type="molecule type" value="mRNA"/>
</dbReference>
<dbReference type="EMBL" id="BT099840">
    <property type="protein sequence ID" value="ACW83548.1"/>
    <property type="status" value="ALT_INIT"/>
    <property type="molecule type" value="mRNA"/>
</dbReference>
<dbReference type="EMBL" id="BT100001">
    <property type="protein sequence ID" value="ACX54885.1"/>
    <property type="molecule type" value="mRNA"/>
</dbReference>
<dbReference type="EMBL" id="BT100049">
    <property type="protein sequence ID" value="ACX61590.1"/>
    <property type="molecule type" value="mRNA"/>
</dbReference>
<dbReference type="EMBL" id="BT125905">
    <property type="protein sequence ID" value="ADV19046.1"/>
    <property type="status" value="ALT_INIT"/>
    <property type="molecule type" value="mRNA"/>
</dbReference>
<dbReference type="EMBL" id="BT150108">
    <property type="protein sequence ID" value="AGM20425.1"/>
    <property type="status" value="ALT_INIT"/>
    <property type="molecule type" value="mRNA"/>
</dbReference>
<dbReference type="EMBL" id="BT150112">
    <property type="protein sequence ID" value="AGN28833.1"/>
    <property type="status" value="ALT_INIT"/>
    <property type="molecule type" value="mRNA"/>
</dbReference>
<dbReference type="RefSeq" id="NP_001014469.1">
    <molecule id="Q9VMU5-1"/>
    <property type="nucleotide sequence ID" value="NM_001014469.2"/>
</dbReference>
<dbReference type="RefSeq" id="NP_001188690.1">
    <molecule id="Q9VMU5-3"/>
    <property type="nucleotide sequence ID" value="NM_001201761.2"/>
</dbReference>
<dbReference type="RefSeq" id="NP_001285611.1">
    <molecule id="Q9VMU5-4"/>
    <property type="nucleotide sequence ID" value="NM_001298682.1"/>
</dbReference>
<dbReference type="RefSeq" id="NP_001285612.1">
    <molecule id="Q9VMU5-5"/>
    <property type="nucleotide sequence ID" value="NM_001298683.1"/>
</dbReference>
<dbReference type="RefSeq" id="NP_523480.2">
    <molecule id="Q9VMU5-1"/>
    <property type="nucleotide sequence ID" value="NM_078756.4"/>
</dbReference>
<dbReference type="RefSeq" id="NP_723057.1">
    <molecule id="Q9VMU5-2"/>
    <property type="nucleotide sequence ID" value="NM_164625.2"/>
</dbReference>
<dbReference type="SMR" id="Q9VMU5"/>
<dbReference type="FunCoup" id="Q9VMU5">
    <property type="interactions" value="15"/>
</dbReference>
<dbReference type="IntAct" id="Q9VMU5">
    <property type="interactions" value="1"/>
</dbReference>
<dbReference type="STRING" id="7227.FBpp0078651"/>
<dbReference type="PaxDb" id="7227-FBpp0078651"/>
<dbReference type="DNASU" id="33739"/>
<dbReference type="EnsemblMetazoa" id="FBtr0079012">
    <molecule id="Q9VMU5-1"/>
    <property type="protein sequence ID" value="FBpp0078651"/>
    <property type="gene ID" value="FBgn0028572"/>
</dbReference>
<dbReference type="EnsemblMetazoa" id="FBtr0079013">
    <molecule id="Q9VMU5-2"/>
    <property type="protein sequence ID" value="FBpp0078652"/>
    <property type="gene ID" value="FBgn0028572"/>
</dbReference>
<dbReference type="EnsemblMetazoa" id="FBtr0100260">
    <molecule id="Q9VMU5-1"/>
    <property type="protein sequence ID" value="FBpp0099649"/>
    <property type="gene ID" value="FBgn0028572"/>
</dbReference>
<dbReference type="EnsemblMetazoa" id="FBtr0302569">
    <molecule id="Q9VMU5-3"/>
    <property type="protein sequence ID" value="FBpp0291725"/>
    <property type="gene ID" value="FBgn0028572"/>
</dbReference>
<dbReference type="EnsemblMetazoa" id="FBtr0339791">
    <molecule id="Q9VMU5-4"/>
    <property type="protein sequence ID" value="FBpp0308838"/>
    <property type="gene ID" value="FBgn0028572"/>
</dbReference>
<dbReference type="EnsemblMetazoa" id="FBtr0339792">
    <molecule id="Q9VMU5-5"/>
    <property type="protein sequence ID" value="FBpp0308839"/>
    <property type="gene ID" value="FBgn0028572"/>
</dbReference>
<dbReference type="GeneID" id="33739"/>
<dbReference type="KEGG" id="dme:Dmel_CG14039"/>
<dbReference type="UCSC" id="CG14039-RA">
    <molecule id="Q9VMU5-1"/>
    <property type="organism name" value="d. melanogaster"/>
</dbReference>
<dbReference type="UCSC" id="CG14039-RB">
    <property type="organism name" value="d. melanogaster"/>
</dbReference>
<dbReference type="AGR" id="FB:FBgn0028572"/>
<dbReference type="CTD" id="33739"/>
<dbReference type="FlyBase" id="FBgn0028572">
    <property type="gene designation" value="qtc"/>
</dbReference>
<dbReference type="VEuPathDB" id="VectorBase:FBgn0028572"/>
<dbReference type="eggNOG" id="ENOG502RVFC">
    <property type="taxonomic scope" value="Eukaryota"/>
</dbReference>
<dbReference type="HOGENOM" id="CLU_013488_0_0_1"/>
<dbReference type="InParanoid" id="Q9VMU5"/>
<dbReference type="OMA" id="DEHYCAG"/>
<dbReference type="OrthoDB" id="5807119at2759"/>
<dbReference type="PhylomeDB" id="Q9VMU5"/>
<dbReference type="BioGRID-ORCS" id="33739">
    <property type="hits" value="0 hits in 1 CRISPR screen"/>
</dbReference>
<dbReference type="GenomeRNAi" id="33739"/>
<dbReference type="PRO" id="PR:Q9VMU5"/>
<dbReference type="Proteomes" id="UP000000803">
    <property type="component" value="Chromosome 2L"/>
</dbReference>
<dbReference type="Bgee" id="FBgn0028572">
    <property type="expression patterns" value="Expressed in lamina monopolar neuron L2 (Drosophila) in brain and 226 other cell types or tissues"/>
</dbReference>
<dbReference type="ExpressionAtlas" id="Q9VMU5">
    <property type="expression patterns" value="baseline and differential"/>
</dbReference>
<dbReference type="GO" id="GO:0007619">
    <property type="term" value="P:courtship behavior"/>
    <property type="evidence" value="ECO:0000304"/>
    <property type="project" value="FlyBase"/>
</dbReference>
<dbReference type="GO" id="GO:0008049">
    <property type="term" value="P:male courtship behavior"/>
    <property type="evidence" value="ECO:0000315"/>
    <property type="project" value="FlyBase"/>
</dbReference>
<dbReference type="GO" id="GO:0048047">
    <property type="term" value="P:mating behavior, sex discrimination"/>
    <property type="evidence" value="ECO:0000314"/>
    <property type="project" value="FlyBase"/>
</dbReference>
<dbReference type="InterPro" id="IPR000237">
    <property type="entry name" value="GRIP_dom"/>
</dbReference>
<dbReference type="Pfam" id="PF01465">
    <property type="entry name" value="GRIP"/>
    <property type="match status" value="1"/>
</dbReference>
<dbReference type="PROSITE" id="PS50913">
    <property type="entry name" value="GRIP"/>
    <property type="match status" value="1"/>
</dbReference>
<accession>Q9VMU5</accession>
<accession>C8VV94</accession>
<accession>C9QPB9</accession>
<accession>E6PBY5</accession>
<accession>M9MRI9</accession>
<accession>Q8I0H9</accession>
<accession>Q95TG9</accession>
<accession>R4TUN8</accession>
<accession>R9TC66</accession>
<accession>X2J8M5</accession>
<accession>X2J9D4</accession>
<gene>
    <name evidence="6 15" type="primary">qtc</name>
    <name evidence="15" type="ORF">CG14039</name>
</gene>
<evidence type="ECO:0000255" key="1"/>
<evidence type="ECO:0000255" key="2">
    <source>
        <dbReference type="PROSITE-ProRule" id="PRU00250"/>
    </source>
</evidence>
<evidence type="ECO:0000256" key="3">
    <source>
        <dbReference type="SAM" id="MobiDB-lite"/>
    </source>
</evidence>
<evidence type="ECO:0000269" key="4">
    <source>
    </source>
</evidence>
<evidence type="ECO:0000269" key="5">
    <source>
    </source>
</evidence>
<evidence type="ECO:0000303" key="6">
    <source>
    </source>
</evidence>
<evidence type="ECO:0000305" key="7"/>
<evidence type="ECO:0000312" key="8">
    <source>
        <dbReference type="EMBL" id="AAL14006.1"/>
    </source>
</evidence>
<evidence type="ECO:0000312" key="9">
    <source>
        <dbReference type="EMBL" id="ACW83548.1"/>
    </source>
</evidence>
<evidence type="ECO:0000312" key="10">
    <source>
        <dbReference type="EMBL" id="ACX54885.1"/>
    </source>
</evidence>
<evidence type="ECO:0000312" key="11">
    <source>
        <dbReference type="EMBL" id="ACX61590.1"/>
    </source>
</evidence>
<evidence type="ECO:0000312" key="12">
    <source>
        <dbReference type="EMBL" id="ADV19046.1"/>
    </source>
</evidence>
<evidence type="ECO:0000312" key="13">
    <source>
        <dbReference type="EMBL" id="AGM20425.1"/>
    </source>
</evidence>
<evidence type="ECO:0000312" key="14">
    <source>
        <dbReference type="EMBL" id="AGN28833.1"/>
    </source>
</evidence>
<evidence type="ECO:0000312" key="15">
    <source>
        <dbReference type="FlyBase" id="FBgn0028572"/>
    </source>
</evidence>
<evidence type="ECO:0000312" key="16">
    <source>
        <dbReference type="Proteomes" id="UP000000803"/>
    </source>
</evidence>
<feature type="chain" id="PRO_0000451730" description="Protein quick-to-court">
    <location>
        <begin position="1"/>
        <end position="721"/>
    </location>
</feature>
<feature type="domain" description="GRIP" evidence="2">
    <location>
        <begin position="668"/>
        <end position="716"/>
    </location>
</feature>
<feature type="region of interest" description="Disordered" evidence="3">
    <location>
        <begin position="1"/>
        <end position="42"/>
    </location>
</feature>
<feature type="region of interest" description="Disordered" evidence="3">
    <location>
        <begin position="143"/>
        <end position="210"/>
    </location>
</feature>
<feature type="region of interest" description="Disordered" evidence="3">
    <location>
        <begin position="360"/>
        <end position="379"/>
    </location>
</feature>
<feature type="region of interest" description="Disordered" evidence="3">
    <location>
        <begin position="393"/>
        <end position="428"/>
    </location>
</feature>
<feature type="region of interest" description="Disordered" evidence="3">
    <location>
        <begin position="441"/>
        <end position="471"/>
    </location>
</feature>
<feature type="coiled-coil region" evidence="1">
    <location>
        <begin position="511"/>
        <end position="569"/>
    </location>
</feature>
<feature type="compositionally biased region" description="Basic and acidic residues" evidence="3">
    <location>
        <begin position="17"/>
        <end position="31"/>
    </location>
</feature>
<feature type="compositionally biased region" description="Low complexity" evidence="3">
    <location>
        <begin position="161"/>
        <end position="201"/>
    </location>
</feature>
<feature type="compositionally biased region" description="Basic and acidic residues" evidence="3">
    <location>
        <begin position="362"/>
        <end position="379"/>
    </location>
</feature>
<feature type="compositionally biased region" description="Low complexity" evidence="3">
    <location>
        <begin position="406"/>
        <end position="420"/>
    </location>
</feature>
<feature type="compositionally biased region" description="Polar residues" evidence="3">
    <location>
        <begin position="441"/>
        <end position="454"/>
    </location>
</feature>
<feature type="splice variant" id="VSP_060838" description="In isoform B, isoform H and isoform N.">
    <original>MMTSLQLETSLPAVEEQVQREKDNDSAEDSHTASTTPTRIPHPAVARFRRSASLRLRGNPAELGLRAEHCPAGGGGFSSRAKLTAIPSSLETRSHPVHLRRNRSWCNLGHKTEQEPEVEASTEALCNAAQCLSLDKEALAPKVGNSSMANGKPRNL</original>
    <variation>M</variation>
    <location>
        <begin position="1"/>
        <end position="156"/>
    </location>
</feature>
<feature type="splice variant" id="VSP_060839" description="In isoform M.">
    <original>MMTSLQLETSLPAVEEQVQREKDNDSAEDSHTASTTPTRIPHPAVARFRRSASLRLRGNPAELGLRAEHCPAGGGGFSSRAKLTAIPSSLETRSHPVHLRRNRSWCNLGHKTEQEPEVEASTEALCNAAQCLSLDKEALAPKVGNSSMANGKPRNL</original>
    <variation>MASVYLRILKFLVKCSKRVFKKANKKDALASQT</variation>
    <location>
        <begin position="1"/>
        <end position="156"/>
    </location>
</feature>
<feature type="splice variant" id="VSP_060840" description="In isoform M and isoform N.">
    <location>
        <begin position="623"/>
        <end position="653"/>
    </location>
</feature>
<feature type="splice variant" id="VSP_060841" description="In isoform H.">
    <original>ASECRMRECGSNHALLTAKEAIS</original>
    <variation>VRFFNIFLILFSVLFCVLHFVAS</variation>
    <location>
        <begin position="623"/>
        <end position="645"/>
    </location>
</feature>
<feature type="splice variant" id="VSP_060842" description="In isoform H.">
    <location>
        <begin position="646"/>
        <end position="721"/>
    </location>
</feature>
<feature type="splice variant" id="VSP_060843" description="In isoform M and isoform N.">
    <original>K</original>
    <variation>KLHAKMSKTMSTILVRAKLHCFQLIGWRH</variation>
    <location>
        <position position="721"/>
    </location>
</feature>
<feature type="sequence conflict" description="In Ref. 4; ACX54885." evidence="7" ref="4">
    <original>V</original>
    <variation>I</variation>
    <location>
        <position position="245"/>
    </location>
</feature>
<feature type="sequence conflict" description="In Ref. 4; ACX54885." evidence="7" ref="4">
    <original>G</original>
    <variation>R</variation>
    <location>
        <position position="462"/>
    </location>
</feature>
<reference evidence="16" key="1">
    <citation type="journal article" date="2000" name="Science">
        <title>The genome sequence of Drosophila melanogaster.</title>
        <authorList>
            <person name="Adams M.D."/>
            <person name="Celniker S.E."/>
            <person name="Holt R.A."/>
            <person name="Evans C.A."/>
            <person name="Gocayne J.D."/>
            <person name="Amanatides P.G."/>
            <person name="Scherer S.E."/>
            <person name="Li P.W."/>
            <person name="Hoskins R.A."/>
            <person name="Galle R.F."/>
            <person name="George R.A."/>
            <person name="Lewis S.E."/>
            <person name="Richards S."/>
            <person name="Ashburner M."/>
            <person name="Henderson S.N."/>
            <person name="Sutton G.G."/>
            <person name="Wortman J.R."/>
            <person name="Yandell M.D."/>
            <person name="Zhang Q."/>
            <person name="Chen L.X."/>
            <person name="Brandon R.C."/>
            <person name="Rogers Y.-H.C."/>
            <person name="Blazej R.G."/>
            <person name="Champe M."/>
            <person name="Pfeiffer B.D."/>
            <person name="Wan K.H."/>
            <person name="Doyle C."/>
            <person name="Baxter E.G."/>
            <person name="Helt G."/>
            <person name="Nelson C.R."/>
            <person name="Miklos G.L.G."/>
            <person name="Abril J.F."/>
            <person name="Agbayani A."/>
            <person name="An H.-J."/>
            <person name="Andrews-Pfannkoch C."/>
            <person name="Baldwin D."/>
            <person name="Ballew R.M."/>
            <person name="Basu A."/>
            <person name="Baxendale J."/>
            <person name="Bayraktaroglu L."/>
            <person name="Beasley E.M."/>
            <person name="Beeson K.Y."/>
            <person name="Benos P.V."/>
            <person name="Berman B.P."/>
            <person name="Bhandari D."/>
            <person name="Bolshakov S."/>
            <person name="Borkova D."/>
            <person name="Botchan M.R."/>
            <person name="Bouck J."/>
            <person name="Brokstein P."/>
            <person name="Brottier P."/>
            <person name="Burtis K.C."/>
            <person name="Busam D.A."/>
            <person name="Butler H."/>
            <person name="Cadieu E."/>
            <person name="Center A."/>
            <person name="Chandra I."/>
            <person name="Cherry J.M."/>
            <person name="Cawley S."/>
            <person name="Dahlke C."/>
            <person name="Davenport L.B."/>
            <person name="Davies P."/>
            <person name="de Pablos B."/>
            <person name="Delcher A."/>
            <person name="Deng Z."/>
            <person name="Mays A.D."/>
            <person name="Dew I."/>
            <person name="Dietz S.M."/>
            <person name="Dodson K."/>
            <person name="Doup L.E."/>
            <person name="Downes M."/>
            <person name="Dugan-Rocha S."/>
            <person name="Dunkov B.C."/>
            <person name="Dunn P."/>
            <person name="Durbin K.J."/>
            <person name="Evangelista C.C."/>
            <person name="Ferraz C."/>
            <person name="Ferriera S."/>
            <person name="Fleischmann W."/>
            <person name="Fosler C."/>
            <person name="Gabrielian A.E."/>
            <person name="Garg N.S."/>
            <person name="Gelbart W.M."/>
            <person name="Glasser K."/>
            <person name="Glodek A."/>
            <person name="Gong F."/>
            <person name="Gorrell J.H."/>
            <person name="Gu Z."/>
            <person name="Guan P."/>
            <person name="Harris M."/>
            <person name="Harris N.L."/>
            <person name="Harvey D.A."/>
            <person name="Heiman T.J."/>
            <person name="Hernandez J.R."/>
            <person name="Houck J."/>
            <person name="Hostin D."/>
            <person name="Houston K.A."/>
            <person name="Howland T.J."/>
            <person name="Wei M.-H."/>
            <person name="Ibegwam C."/>
            <person name="Jalali M."/>
            <person name="Kalush F."/>
            <person name="Karpen G.H."/>
            <person name="Ke Z."/>
            <person name="Kennison J.A."/>
            <person name="Ketchum K.A."/>
            <person name="Kimmel B.E."/>
            <person name="Kodira C.D."/>
            <person name="Kraft C.L."/>
            <person name="Kravitz S."/>
            <person name="Kulp D."/>
            <person name="Lai Z."/>
            <person name="Lasko P."/>
            <person name="Lei Y."/>
            <person name="Levitsky A.A."/>
            <person name="Li J.H."/>
            <person name="Li Z."/>
            <person name="Liang Y."/>
            <person name="Lin X."/>
            <person name="Liu X."/>
            <person name="Mattei B."/>
            <person name="McIntosh T.C."/>
            <person name="McLeod M.P."/>
            <person name="McPherson D."/>
            <person name="Merkulov G."/>
            <person name="Milshina N.V."/>
            <person name="Mobarry C."/>
            <person name="Morris J."/>
            <person name="Moshrefi A."/>
            <person name="Mount S.M."/>
            <person name="Moy M."/>
            <person name="Murphy B."/>
            <person name="Murphy L."/>
            <person name="Muzny D.M."/>
            <person name="Nelson D.L."/>
            <person name="Nelson D.R."/>
            <person name="Nelson K.A."/>
            <person name="Nixon K."/>
            <person name="Nusskern D.R."/>
            <person name="Pacleb J.M."/>
            <person name="Palazzolo M."/>
            <person name="Pittman G.S."/>
            <person name="Pan S."/>
            <person name="Pollard J."/>
            <person name="Puri V."/>
            <person name="Reese M.G."/>
            <person name="Reinert K."/>
            <person name="Remington K."/>
            <person name="Saunders R.D.C."/>
            <person name="Scheeler F."/>
            <person name="Shen H."/>
            <person name="Shue B.C."/>
            <person name="Siden-Kiamos I."/>
            <person name="Simpson M."/>
            <person name="Skupski M.P."/>
            <person name="Smith T.J."/>
            <person name="Spier E."/>
            <person name="Spradling A.C."/>
            <person name="Stapleton M."/>
            <person name="Strong R."/>
            <person name="Sun E."/>
            <person name="Svirskas R."/>
            <person name="Tector C."/>
            <person name="Turner R."/>
            <person name="Venter E."/>
            <person name="Wang A.H."/>
            <person name="Wang X."/>
            <person name="Wang Z.-Y."/>
            <person name="Wassarman D.A."/>
            <person name="Weinstock G.M."/>
            <person name="Weissenbach J."/>
            <person name="Williams S.M."/>
            <person name="Woodage T."/>
            <person name="Worley K.C."/>
            <person name="Wu D."/>
            <person name="Yang S."/>
            <person name="Yao Q.A."/>
            <person name="Ye J."/>
            <person name="Yeh R.-F."/>
            <person name="Zaveri J.S."/>
            <person name="Zhan M."/>
            <person name="Zhang G."/>
            <person name="Zhao Q."/>
            <person name="Zheng L."/>
            <person name="Zheng X.H."/>
            <person name="Zhong F.N."/>
            <person name="Zhong W."/>
            <person name="Zhou X."/>
            <person name="Zhu S.C."/>
            <person name="Zhu X."/>
            <person name="Smith H.O."/>
            <person name="Gibbs R.A."/>
            <person name="Myers E.W."/>
            <person name="Rubin G.M."/>
            <person name="Venter J.C."/>
        </authorList>
    </citation>
    <scope>NUCLEOTIDE SEQUENCE [LARGE SCALE GENOMIC DNA]</scope>
    <source>
        <strain evidence="16">Berkeley</strain>
    </source>
</reference>
<reference evidence="16" key="2">
    <citation type="journal article" date="2002" name="Genome Biol.">
        <title>Annotation of the Drosophila melanogaster euchromatic genome: a systematic review.</title>
        <authorList>
            <person name="Misra S."/>
            <person name="Crosby M.A."/>
            <person name="Mungall C.J."/>
            <person name="Matthews B.B."/>
            <person name="Campbell K.S."/>
            <person name="Hradecky P."/>
            <person name="Huang Y."/>
            <person name="Kaminker J.S."/>
            <person name="Millburn G.H."/>
            <person name="Prochnik S.E."/>
            <person name="Smith C.D."/>
            <person name="Tupy J.L."/>
            <person name="Whitfield E.J."/>
            <person name="Bayraktaroglu L."/>
            <person name="Berman B.P."/>
            <person name="Bettencourt B.R."/>
            <person name="Celniker S.E."/>
            <person name="de Grey A.D.N.J."/>
            <person name="Drysdale R.A."/>
            <person name="Harris N.L."/>
            <person name="Richter J."/>
            <person name="Russo S."/>
            <person name="Schroeder A.J."/>
            <person name="Shu S.Q."/>
            <person name="Stapleton M."/>
            <person name="Yamada C."/>
            <person name="Ashburner M."/>
            <person name="Gelbart W.M."/>
            <person name="Rubin G.M."/>
            <person name="Lewis S.E."/>
        </authorList>
    </citation>
    <scope>GENOME REANNOTATION</scope>
    <source>
        <strain evidence="16">Berkeley</strain>
    </source>
</reference>
<reference evidence="8" key="3">
    <citation type="journal article" date="2002" name="Genome Biol.">
        <title>A Drosophila full-length cDNA resource.</title>
        <authorList>
            <person name="Stapleton M."/>
            <person name="Carlson J.W."/>
            <person name="Brokstein P."/>
            <person name="Yu C."/>
            <person name="Champe M."/>
            <person name="George R.A."/>
            <person name="Guarin H."/>
            <person name="Kronmiller B."/>
            <person name="Pacleb J.M."/>
            <person name="Park S."/>
            <person name="Wan K.H."/>
            <person name="Rubin G.M."/>
            <person name="Celniker S.E."/>
        </authorList>
    </citation>
    <scope>NUCLEOTIDE SEQUENCE [LARGE SCALE MRNA] (ISOFORM A)</scope>
    <source>
        <strain evidence="8">Berkeley</strain>
        <tissue evidence="8">Embryo</tissue>
    </source>
</reference>
<reference evidence="9 10 11 12 13 14" key="4">
    <citation type="submission" date="2013-06" db="EMBL/GenBank/DDBJ databases">
        <authorList>
            <person name="Carlson J."/>
            <person name="Booth B."/>
            <person name="Frise E."/>
            <person name="Sandler J."/>
            <person name="Wan K."/>
            <person name="Yu C."/>
            <person name="Celniker S."/>
        </authorList>
    </citation>
    <scope>NUCLEOTIDE SEQUENCE [LARGE SCALE MRNA] (ISOFORMS B; H; M AND N)</scope>
    <source>
        <strain evidence="9 10 11 12 13 14">Berkeley</strain>
        <tissue evidence="10">Embryo</tissue>
        <tissue evidence="11">Head</tissue>
        <tissue evidence="9 12">Testis</tissue>
    </source>
</reference>
<reference evidence="7" key="5">
    <citation type="journal article" date="2000" name="Genetics">
        <title>quick-to-court, a Drosophila mutant with elevated levels of sexual behavior, is defective in a predicted coiled-coil protein.</title>
        <authorList>
            <person name="Gaines P."/>
            <person name="Tompkins L."/>
            <person name="Woodard C.T."/>
            <person name="Carlson J.R."/>
        </authorList>
    </citation>
    <scope>FUNCTION</scope>
    <scope>TISSUE SPECIFICITY</scope>
    <scope>DEVELOPMENTAL STAGE</scope>
    <scope>DISRUPTION PHENOTYPE</scope>
</reference>
<reference evidence="7" key="6">
    <citation type="journal article" date="2012" name="PLoS ONE">
        <title>Genes involved in sex pheromone discrimination in Drosophila melanogaster and their background-dependent effect.</title>
        <authorList>
            <person name="Houot B."/>
            <person name="Fraichard S."/>
            <person name="Greenspan R.J."/>
            <person name="Ferveur J.F."/>
        </authorList>
    </citation>
    <scope>FUNCTION</scope>
    <scope>DISRUPTION PHENOTYPE</scope>
</reference>
<keyword id="KW-0025">Alternative splicing</keyword>
<keyword id="KW-0085">Behavior</keyword>
<keyword id="KW-0175">Coiled coil</keyword>
<keyword id="KW-1185">Reference proteome</keyword>
<organism evidence="16">
    <name type="scientific">Drosophila melanogaster</name>
    <name type="common">Fruit fly</name>
    <dbReference type="NCBI Taxonomy" id="7227"/>
    <lineage>
        <taxon>Eukaryota</taxon>
        <taxon>Metazoa</taxon>
        <taxon>Ecdysozoa</taxon>
        <taxon>Arthropoda</taxon>
        <taxon>Hexapoda</taxon>
        <taxon>Insecta</taxon>
        <taxon>Pterygota</taxon>
        <taxon>Neoptera</taxon>
        <taxon>Endopterygota</taxon>
        <taxon>Diptera</taxon>
        <taxon>Brachycera</taxon>
        <taxon>Muscomorpha</taxon>
        <taxon>Ephydroidea</taxon>
        <taxon>Drosophilidae</taxon>
        <taxon>Drosophila</taxon>
        <taxon>Sophophora</taxon>
    </lineage>
</organism>
<sequence>MMTSLQLETSLPAVEEQVQREKDNDSAEDSHTASTTPTRIPHPAVARFRRSASLRLRGNPAELGLRAEHCPAGGGGFSSRAKLTAIPSSLETRSHPVHLRRNRSWCNLGHKTEQEPEVEASTEALCNAAQCLSLDKEALAPKVGNSSMANGKPRNLSLQLNGGSDISSSGTSSSSSNNKESSPRTTRTPRTPQTPQTPQTPASGVAASVAETPHSCIRQGNCVKANQVKLSTLHESKISPRTPPVTPDSPSTYLDDDIDSMYSFATTTSGRSTMSCEHPYVARNGTTFSGRKMKYVVHCSNYAGQVGPDYLTPTQRAQRQIRRLKELLCIARQDLEQKDTELLRLTREVVELRLFKASLSSPEERSASSDAVTVREAELKTSQDVSPIVDMVDEGNAKGSPRHLSRQQQQQANHSLQAMQMSAEMQSSYADSGHFEDLTMSSVHSKDSQTQSEACGTATPDGEADVGCGAGGDSASNLENYELQRQELISMYEHRIEELIRSQDSATSDLKRSHNDKVEALLQKLAECNTRYSDMVPDYEQAKQRIRELEKQLEDLQRKLIEHEEKQNKMYLHMYQQGQEAERISRADQALDLAQRQPESKVSINELLHQLQSTQDELENIRASECRMRECGSNHALLTAKEAISLWVLGARKTIYRRLLEAQKNRTHVDPEVTLQFLKSAIFYFLTDKENSQGHLQAIESILEFTDAEKQKISAANRTPK</sequence>